<feature type="chain" id="PRO_0000113047" description="Ornithine carbamoyltransferase">
    <location>
        <begin position="1"/>
        <end position="318"/>
    </location>
</feature>
<feature type="binding site" evidence="2">
    <location>
        <begin position="63"/>
        <end position="66"/>
    </location>
    <ligand>
        <name>carbamoyl phosphate</name>
        <dbReference type="ChEBI" id="CHEBI:58228"/>
    </ligand>
</feature>
<feature type="binding site" evidence="2">
    <location>
        <position position="90"/>
    </location>
    <ligand>
        <name>carbamoyl phosphate</name>
        <dbReference type="ChEBI" id="CHEBI:58228"/>
    </ligand>
</feature>
<feature type="binding site" evidence="2">
    <location>
        <position position="114"/>
    </location>
    <ligand>
        <name>carbamoyl phosphate</name>
        <dbReference type="ChEBI" id="CHEBI:58228"/>
    </ligand>
</feature>
<feature type="binding site" evidence="2">
    <location>
        <begin position="141"/>
        <end position="144"/>
    </location>
    <ligand>
        <name>carbamoyl phosphate</name>
        <dbReference type="ChEBI" id="CHEBI:58228"/>
    </ligand>
</feature>
<feature type="binding site" evidence="2">
    <location>
        <position position="172"/>
    </location>
    <ligand>
        <name>L-ornithine</name>
        <dbReference type="ChEBI" id="CHEBI:46911"/>
    </ligand>
</feature>
<feature type="binding site" evidence="2">
    <location>
        <position position="235"/>
    </location>
    <ligand>
        <name>L-ornithine</name>
        <dbReference type="ChEBI" id="CHEBI:46911"/>
    </ligand>
</feature>
<feature type="binding site" evidence="2">
    <location>
        <begin position="239"/>
        <end position="240"/>
    </location>
    <ligand>
        <name>L-ornithine</name>
        <dbReference type="ChEBI" id="CHEBI:46911"/>
    </ligand>
</feature>
<feature type="binding site" evidence="2">
    <location>
        <begin position="275"/>
        <end position="276"/>
    </location>
    <ligand>
        <name>carbamoyl phosphate</name>
        <dbReference type="ChEBI" id="CHEBI:58228"/>
    </ligand>
</feature>
<feature type="binding site" evidence="2">
    <location>
        <position position="303"/>
    </location>
    <ligand>
        <name>carbamoyl phosphate</name>
        <dbReference type="ChEBI" id="CHEBI:58228"/>
    </ligand>
</feature>
<organism>
    <name type="scientific">Parasynechococcus marenigrum (strain WH8102)</name>
    <dbReference type="NCBI Taxonomy" id="84588"/>
    <lineage>
        <taxon>Bacteria</taxon>
        <taxon>Bacillati</taxon>
        <taxon>Cyanobacteriota</taxon>
        <taxon>Cyanophyceae</taxon>
        <taxon>Synechococcales</taxon>
        <taxon>Prochlorococcaceae</taxon>
        <taxon>Parasynechococcus</taxon>
        <taxon>Parasynechococcus marenigrum</taxon>
    </lineage>
</organism>
<keyword id="KW-0028">Amino-acid biosynthesis</keyword>
<keyword id="KW-0055">Arginine biosynthesis</keyword>
<keyword id="KW-0963">Cytoplasm</keyword>
<keyword id="KW-0808">Transferase</keyword>
<accession>Q7U5V5</accession>
<protein>
    <recommendedName>
        <fullName evidence="2">Ornithine carbamoyltransferase</fullName>
        <shortName evidence="2">OTCase</shortName>
        <ecNumber evidence="2">2.1.3.3</ecNumber>
    </recommendedName>
</protein>
<dbReference type="EC" id="2.1.3.3" evidence="2"/>
<dbReference type="EMBL" id="BX569693">
    <property type="protein sequence ID" value="CAE08101.1"/>
    <property type="molecule type" value="Genomic_DNA"/>
</dbReference>
<dbReference type="RefSeq" id="WP_011128450.1">
    <property type="nucleotide sequence ID" value="NC_005070.1"/>
</dbReference>
<dbReference type="SMR" id="Q7U5V5"/>
<dbReference type="STRING" id="84588.SYNW1586"/>
<dbReference type="KEGG" id="syw:SYNW1586"/>
<dbReference type="eggNOG" id="COG0078">
    <property type="taxonomic scope" value="Bacteria"/>
</dbReference>
<dbReference type="HOGENOM" id="CLU_043846_3_2_3"/>
<dbReference type="UniPathway" id="UPA00068">
    <property type="reaction ID" value="UER00112"/>
</dbReference>
<dbReference type="Proteomes" id="UP000001422">
    <property type="component" value="Chromosome"/>
</dbReference>
<dbReference type="GO" id="GO:0005737">
    <property type="term" value="C:cytoplasm"/>
    <property type="evidence" value="ECO:0007669"/>
    <property type="project" value="UniProtKB-SubCell"/>
</dbReference>
<dbReference type="GO" id="GO:0016597">
    <property type="term" value="F:amino acid binding"/>
    <property type="evidence" value="ECO:0007669"/>
    <property type="project" value="InterPro"/>
</dbReference>
<dbReference type="GO" id="GO:0004585">
    <property type="term" value="F:ornithine carbamoyltransferase activity"/>
    <property type="evidence" value="ECO:0007669"/>
    <property type="project" value="UniProtKB-UniRule"/>
</dbReference>
<dbReference type="GO" id="GO:0042450">
    <property type="term" value="P:arginine biosynthetic process via ornithine"/>
    <property type="evidence" value="ECO:0007669"/>
    <property type="project" value="TreeGrafter"/>
</dbReference>
<dbReference type="GO" id="GO:0019240">
    <property type="term" value="P:citrulline biosynthetic process"/>
    <property type="evidence" value="ECO:0007669"/>
    <property type="project" value="TreeGrafter"/>
</dbReference>
<dbReference type="GO" id="GO:0006526">
    <property type="term" value="P:L-arginine biosynthetic process"/>
    <property type="evidence" value="ECO:0007669"/>
    <property type="project" value="UniProtKB-UniRule"/>
</dbReference>
<dbReference type="FunFam" id="3.40.50.1370:FF:000008">
    <property type="entry name" value="Ornithine carbamoyltransferase"/>
    <property type="match status" value="1"/>
</dbReference>
<dbReference type="Gene3D" id="3.40.50.1370">
    <property type="entry name" value="Aspartate/ornithine carbamoyltransferase"/>
    <property type="match status" value="2"/>
</dbReference>
<dbReference type="HAMAP" id="MF_01109">
    <property type="entry name" value="OTCase"/>
    <property type="match status" value="1"/>
</dbReference>
<dbReference type="InterPro" id="IPR006132">
    <property type="entry name" value="Asp/Orn_carbamoyltranf_P-bd"/>
</dbReference>
<dbReference type="InterPro" id="IPR006130">
    <property type="entry name" value="Asp/Orn_carbamoylTrfase"/>
</dbReference>
<dbReference type="InterPro" id="IPR036901">
    <property type="entry name" value="Asp/Orn_carbamoylTrfase_sf"/>
</dbReference>
<dbReference type="InterPro" id="IPR006131">
    <property type="entry name" value="Asp_carbamoyltransf_Asp/Orn-bd"/>
</dbReference>
<dbReference type="InterPro" id="IPR002292">
    <property type="entry name" value="Orn/put_carbamltrans"/>
</dbReference>
<dbReference type="InterPro" id="IPR024904">
    <property type="entry name" value="OTCase_ArgI"/>
</dbReference>
<dbReference type="NCBIfam" id="TIGR00658">
    <property type="entry name" value="orni_carb_tr"/>
    <property type="match status" value="1"/>
</dbReference>
<dbReference type="NCBIfam" id="NF001986">
    <property type="entry name" value="PRK00779.1"/>
    <property type="match status" value="1"/>
</dbReference>
<dbReference type="PANTHER" id="PTHR45753">
    <property type="entry name" value="ORNITHINE CARBAMOYLTRANSFERASE, MITOCHONDRIAL"/>
    <property type="match status" value="1"/>
</dbReference>
<dbReference type="PANTHER" id="PTHR45753:SF3">
    <property type="entry name" value="ORNITHINE TRANSCARBAMYLASE, MITOCHONDRIAL"/>
    <property type="match status" value="1"/>
</dbReference>
<dbReference type="Pfam" id="PF00185">
    <property type="entry name" value="OTCace"/>
    <property type="match status" value="1"/>
</dbReference>
<dbReference type="Pfam" id="PF02729">
    <property type="entry name" value="OTCace_N"/>
    <property type="match status" value="1"/>
</dbReference>
<dbReference type="PRINTS" id="PR00100">
    <property type="entry name" value="AOTCASE"/>
</dbReference>
<dbReference type="PRINTS" id="PR00102">
    <property type="entry name" value="OTCASE"/>
</dbReference>
<dbReference type="SUPFAM" id="SSF53671">
    <property type="entry name" value="Aspartate/ornithine carbamoyltransferase"/>
    <property type="match status" value="1"/>
</dbReference>
<dbReference type="PROSITE" id="PS00097">
    <property type="entry name" value="CARBAMOYLTRANSFERASE"/>
    <property type="match status" value="1"/>
</dbReference>
<gene>
    <name evidence="2" type="primary">argF</name>
    <name type="ordered locus">SYNW1586</name>
</gene>
<proteinExistence type="inferred from homology"/>
<reference key="1">
    <citation type="journal article" date="2003" name="Nature">
        <title>The genome of a motile marine Synechococcus.</title>
        <authorList>
            <person name="Palenik B."/>
            <person name="Brahamsha B."/>
            <person name="Larimer F.W."/>
            <person name="Land M.L."/>
            <person name="Hauser L."/>
            <person name="Chain P."/>
            <person name="Lamerdin J.E."/>
            <person name="Regala W."/>
            <person name="Allen E.E."/>
            <person name="McCarren J."/>
            <person name="Paulsen I.T."/>
            <person name="Dufresne A."/>
            <person name="Partensky F."/>
            <person name="Webb E.A."/>
            <person name="Waterbury J."/>
        </authorList>
    </citation>
    <scope>NUCLEOTIDE SEQUENCE [LARGE SCALE GENOMIC DNA]</scope>
    <source>
        <strain>WH8102</strain>
    </source>
</reference>
<name>OTC_PARMW</name>
<sequence>MATAAAGVAAALSPLSGRDYLSSADCSAEETSAVLDLAAQLKSGDRRIDLGNRVLGLIFTKASTRTRVSFQVAMARLGGQTVDLNPKVTQLGRGEPLEDTARVLSRYCDVLAVRTFAQQELVDYAHWATVPVINALTDLEHPCQSLADFLTMREAHGDLPGQTLAYIGDGNNVAHSLMLCGALLGVNVRIGCPQGFEPLPGVLEQARSLAVQGASIEVIHDPREAVRGAQAVYTDVWASMGQEDEQSEREQAFAGFCVDEALMEAADTEAIVLHCLPAHRGEEISPGVMESSASRIFDQAENRLHAQQALLAALMGGL</sequence>
<evidence type="ECO:0000250" key="1"/>
<evidence type="ECO:0000255" key="2">
    <source>
        <dbReference type="HAMAP-Rule" id="MF_01109"/>
    </source>
</evidence>
<comment type="function">
    <text evidence="1">Reversibly catalyzes the transfer of the carbamoyl group from carbamoyl phosphate (CP) to the N(epsilon) atom of ornithine (ORN) to produce L-citrulline.</text>
</comment>
<comment type="catalytic activity">
    <reaction evidence="2">
        <text>carbamoyl phosphate + L-ornithine = L-citrulline + phosphate + H(+)</text>
        <dbReference type="Rhea" id="RHEA:19513"/>
        <dbReference type="ChEBI" id="CHEBI:15378"/>
        <dbReference type="ChEBI" id="CHEBI:43474"/>
        <dbReference type="ChEBI" id="CHEBI:46911"/>
        <dbReference type="ChEBI" id="CHEBI:57743"/>
        <dbReference type="ChEBI" id="CHEBI:58228"/>
        <dbReference type="EC" id="2.1.3.3"/>
    </reaction>
</comment>
<comment type="pathway">
    <text evidence="2">Amino-acid biosynthesis; L-arginine biosynthesis; L-arginine from L-ornithine and carbamoyl phosphate: step 1/3.</text>
</comment>
<comment type="subcellular location">
    <subcellularLocation>
        <location evidence="2">Cytoplasm</location>
    </subcellularLocation>
</comment>
<comment type="similarity">
    <text evidence="2">Belongs to the aspartate/ornithine carbamoyltransferase superfamily. OTCase family.</text>
</comment>